<organism>
    <name type="scientific">Haemophilus influenzae (strain ATCC 51907 / DSM 11121 / KW20 / Rd)</name>
    <dbReference type="NCBI Taxonomy" id="71421"/>
    <lineage>
        <taxon>Bacteria</taxon>
        <taxon>Pseudomonadati</taxon>
        <taxon>Pseudomonadota</taxon>
        <taxon>Gammaproteobacteria</taxon>
        <taxon>Pasteurellales</taxon>
        <taxon>Pasteurellaceae</taxon>
        <taxon>Haemophilus</taxon>
    </lineage>
</organism>
<protein>
    <recommendedName>
        <fullName evidence="1">Alanine racemase</fullName>
        <ecNumber evidence="1">5.1.1.1</ecNumber>
    </recommendedName>
</protein>
<gene>
    <name type="primary">alr</name>
    <name type="ordered locus">HI_1575</name>
</gene>
<comment type="function">
    <text evidence="1">Catalyzes the interconversion of L-alanine and D-alanine. May also act on other amino acids.</text>
</comment>
<comment type="catalytic activity">
    <reaction evidence="1">
        <text>L-alanine = D-alanine</text>
        <dbReference type="Rhea" id="RHEA:20249"/>
        <dbReference type="ChEBI" id="CHEBI:57416"/>
        <dbReference type="ChEBI" id="CHEBI:57972"/>
        <dbReference type="EC" id="5.1.1.1"/>
    </reaction>
</comment>
<comment type="cofactor">
    <cofactor evidence="1">
        <name>pyridoxal 5'-phosphate</name>
        <dbReference type="ChEBI" id="CHEBI:597326"/>
    </cofactor>
</comment>
<comment type="pathway">
    <text evidence="1">Amino-acid biosynthesis; D-alanine biosynthesis; D-alanine from L-alanine: step 1/1.</text>
</comment>
<comment type="similarity">
    <text evidence="1">Belongs to the alanine racemase family.</text>
</comment>
<sequence>MNVKPATAKISSHALKQNLEIIKQKAPNSKIIAVVKANAYGHGVVFVASTLEQNVDCFGVARLEEALALRSNGITKPILLLEGFFNEQDLPILAVNNIETVVHNHEQLDALKRANLPSPIKVWLKIDTGMHRLGVALDEVDYFYQELKKLPQIQPHLGFVSHFSRADELESDYTQLQINRFLSVTKDKQGERTIAASGGILFWPKSHLECIRPGIIMYGISPTDTIGKEFGLTPVMNLTSSLIAVRHHKQGDPVGYGGIWTSPRDTKIGVVAMGYGDGYPRDVPEGTPVYLNGRLVPIVGRVSMDMLTVDLGADSQDLVGDEVILWGKELPIETVAKFTGILSYELITKLTPRVITEYVD</sequence>
<dbReference type="EC" id="5.1.1.1" evidence="1"/>
<dbReference type="EMBL" id="L42023">
    <property type="protein sequence ID" value="AAC23218.1"/>
    <property type="molecule type" value="Genomic_DNA"/>
</dbReference>
<dbReference type="PIR" id="E64130">
    <property type="entry name" value="E64130"/>
</dbReference>
<dbReference type="RefSeq" id="NP_439721.1">
    <property type="nucleotide sequence ID" value="NC_000907.1"/>
</dbReference>
<dbReference type="SMR" id="P45257"/>
<dbReference type="STRING" id="71421.HI_1575"/>
<dbReference type="EnsemblBacteria" id="AAC23218">
    <property type="protein sequence ID" value="AAC23218"/>
    <property type="gene ID" value="HI_1575"/>
</dbReference>
<dbReference type="KEGG" id="hin:HI_1575"/>
<dbReference type="PATRIC" id="fig|71421.8.peg.1648"/>
<dbReference type="eggNOG" id="COG0787">
    <property type="taxonomic scope" value="Bacteria"/>
</dbReference>
<dbReference type="HOGENOM" id="CLU_028393_1_0_6"/>
<dbReference type="OrthoDB" id="9813814at2"/>
<dbReference type="PhylomeDB" id="P45257"/>
<dbReference type="BioCyc" id="HINF71421:G1GJ1-1593-MONOMER"/>
<dbReference type="BRENDA" id="5.1.1.1">
    <property type="organism ID" value="2529"/>
</dbReference>
<dbReference type="UniPathway" id="UPA00042">
    <property type="reaction ID" value="UER00497"/>
</dbReference>
<dbReference type="Proteomes" id="UP000000579">
    <property type="component" value="Chromosome"/>
</dbReference>
<dbReference type="GO" id="GO:0005829">
    <property type="term" value="C:cytosol"/>
    <property type="evidence" value="ECO:0000318"/>
    <property type="project" value="GO_Central"/>
</dbReference>
<dbReference type="GO" id="GO:0008784">
    <property type="term" value="F:alanine racemase activity"/>
    <property type="evidence" value="ECO:0000318"/>
    <property type="project" value="GO_Central"/>
</dbReference>
<dbReference type="GO" id="GO:0030170">
    <property type="term" value="F:pyridoxal phosphate binding"/>
    <property type="evidence" value="ECO:0000318"/>
    <property type="project" value="GO_Central"/>
</dbReference>
<dbReference type="GO" id="GO:0030632">
    <property type="term" value="P:D-alanine biosynthetic process"/>
    <property type="evidence" value="ECO:0000318"/>
    <property type="project" value="GO_Central"/>
</dbReference>
<dbReference type="CDD" id="cd06827">
    <property type="entry name" value="PLPDE_III_AR_proteobact"/>
    <property type="match status" value="1"/>
</dbReference>
<dbReference type="FunFam" id="2.40.37.10:FF:000002">
    <property type="entry name" value="Alanine racemase"/>
    <property type="match status" value="1"/>
</dbReference>
<dbReference type="FunFam" id="3.20.20.10:FF:000002">
    <property type="entry name" value="Alanine racemase"/>
    <property type="match status" value="1"/>
</dbReference>
<dbReference type="Gene3D" id="3.20.20.10">
    <property type="entry name" value="Alanine racemase"/>
    <property type="match status" value="1"/>
</dbReference>
<dbReference type="Gene3D" id="2.40.37.10">
    <property type="entry name" value="Lyase, Ornithine Decarboxylase, Chain A, domain 1"/>
    <property type="match status" value="1"/>
</dbReference>
<dbReference type="HAMAP" id="MF_01201">
    <property type="entry name" value="Ala_racemase"/>
    <property type="match status" value="1"/>
</dbReference>
<dbReference type="InterPro" id="IPR000821">
    <property type="entry name" value="Ala_racemase"/>
</dbReference>
<dbReference type="InterPro" id="IPR009006">
    <property type="entry name" value="Ala_racemase/Decarboxylase_C"/>
</dbReference>
<dbReference type="InterPro" id="IPR011079">
    <property type="entry name" value="Ala_racemase_C"/>
</dbReference>
<dbReference type="InterPro" id="IPR001608">
    <property type="entry name" value="Ala_racemase_N"/>
</dbReference>
<dbReference type="InterPro" id="IPR020622">
    <property type="entry name" value="Ala_racemase_pyridoxalP-BS"/>
</dbReference>
<dbReference type="InterPro" id="IPR029066">
    <property type="entry name" value="PLP-binding_barrel"/>
</dbReference>
<dbReference type="NCBIfam" id="TIGR00492">
    <property type="entry name" value="alr"/>
    <property type="match status" value="1"/>
</dbReference>
<dbReference type="PANTHER" id="PTHR30511">
    <property type="entry name" value="ALANINE RACEMASE"/>
    <property type="match status" value="1"/>
</dbReference>
<dbReference type="PANTHER" id="PTHR30511:SF4">
    <property type="entry name" value="ALANINE RACEMASE, BIOSYNTHETIC"/>
    <property type="match status" value="1"/>
</dbReference>
<dbReference type="Pfam" id="PF00842">
    <property type="entry name" value="Ala_racemase_C"/>
    <property type="match status" value="1"/>
</dbReference>
<dbReference type="Pfam" id="PF01168">
    <property type="entry name" value="Ala_racemase_N"/>
    <property type="match status" value="1"/>
</dbReference>
<dbReference type="PRINTS" id="PR00992">
    <property type="entry name" value="ALARACEMASE"/>
</dbReference>
<dbReference type="SMART" id="SM01005">
    <property type="entry name" value="Ala_racemase_C"/>
    <property type="match status" value="1"/>
</dbReference>
<dbReference type="SUPFAM" id="SSF50621">
    <property type="entry name" value="Alanine racemase C-terminal domain-like"/>
    <property type="match status" value="1"/>
</dbReference>
<dbReference type="SUPFAM" id="SSF51419">
    <property type="entry name" value="PLP-binding barrel"/>
    <property type="match status" value="1"/>
</dbReference>
<dbReference type="PROSITE" id="PS00395">
    <property type="entry name" value="ALANINE_RACEMASE"/>
    <property type="match status" value="1"/>
</dbReference>
<evidence type="ECO:0000255" key="1">
    <source>
        <dbReference type="HAMAP-Rule" id="MF_01201"/>
    </source>
</evidence>
<proteinExistence type="inferred from homology"/>
<feature type="chain" id="PRO_0000114522" description="Alanine racemase">
    <location>
        <begin position="1"/>
        <end position="360"/>
    </location>
</feature>
<feature type="active site" description="Proton acceptor; specific for D-alanine" evidence="1">
    <location>
        <position position="36"/>
    </location>
</feature>
<feature type="active site" description="Proton acceptor; specific for L-alanine" evidence="1">
    <location>
        <position position="256"/>
    </location>
</feature>
<feature type="binding site" evidence="1">
    <location>
        <position position="132"/>
    </location>
    <ligand>
        <name>substrate</name>
    </ligand>
</feature>
<feature type="binding site" evidence="1">
    <location>
        <position position="304"/>
    </location>
    <ligand>
        <name>substrate</name>
    </ligand>
</feature>
<feature type="modified residue" description="N6-(pyridoxal phosphate)lysine" evidence="1">
    <location>
        <position position="36"/>
    </location>
</feature>
<accession>P45257</accession>
<reference key="1">
    <citation type="journal article" date="1995" name="Science">
        <title>Whole-genome random sequencing and assembly of Haemophilus influenzae Rd.</title>
        <authorList>
            <person name="Fleischmann R.D."/>
            <person name="Adams M.D."/>
            <person name="White O."/>
            <person name="Clayton R.A."/>
            <person name="Kirkness E.F."/>
            <person name="Kerlavage A.R."/>
            <person name="Bult C.J."/>
            <person name="Tomb J.-F."/>
            <person name="Dougherty B.A."/>
            <person name="Merrick J.M."/>
            <person name="McKenney K."/>
            <person name="Sutton G.G."/>
            <person name="FitzHugh W."/>
            <person name="Fields C.A."/>
            <person name="Gocayne J.D."/>
            <person name="Scott J.D."/>
            <person name="Shirley R."/>
            <person name="Liu L.-I."/>
            <person name="Glodek A."/>
            <person name="Kelley J.M."/>
            <person name="Weidman J.F."/>
            <person name="Phillips C.A."/>
            <person name="Spriggs T."/>
            <person name="Hedblom E."/>
            <person name="Cotton M.D."/>
            <person name="Utterback T.R."/>
            <person name="Hanna M.C."/>
            <person name="Nguyen D.T."/>
            <person name="Saudek D.M."/>
            <person name="Brandon R.C."/>
            <person name="Fine L.D."/>
            <person name="Fritchman J.L."/>
            <person name="Fuhrmann J.L."/>
            <person name="Geoghagen N.S.M."/>
            <person name="Gnehm C.L."/>
            <person name="McDonald L.A."/>
            <person name="Small K.V."/>
            <person name="Fraser C.M."/>
            <person name="Smith H.O."/>
            <person name="Venter J.C."/>
        </authorList>
    </citation>
    <scope>NUCLEOTIDE SEQUENCE [LARGE SCALE GENOMIC DNA]</scope>
    <source>
        <strain>ATCC 51907 / DSM 11121 / KW20 / Rd</strain>
    </source>
</reference>
<keyword id="KW-0413">Isomerase</keyword>
<keyword id="KW-0663">Pyridoxal phosphate</keyword>
<keyword id="KW-1185">Reference proteome</keyword>
<name>ALR_HAEIN</name>